<accession>W0T4V8</accession>
<accession>J3QW33</accession>
<sequence length="271" mass="31242">MEELRERVWNGTINVEVVVSDAIVVPNTTLADKSCHIVMLRDAYLGFYLPTVVRKLADTIKVPYESDYRNWWFEYNGEGVPWEYPCGVLFDLLNKKRKKQGNELDDTSLQMWELQLCHGDKYPRGILPLVDGHSQIKDYWRHQWKQACFILNGSAKRIMSLSIPDFENFWVSILSRNRSDFMAVRSKLFSMNKAKSLPVRVWTSNYAVLQPTVPVTDKELSVAELLDSIKLSSDGVKSVIIQGIDVSIEDNIFELYDIFASIDGFLYLVTK</sequence>
<reference key="1">
    <citation type="journal article" date="2015" name="Biotechnol. Biofuels">
        <title>Genetic basis of the highly efficient yeast Kluyveromyces marxianus: complete genome sequence and transcriptome analyses.</title>
        <authorList>
            <person name="Lertwattanasakul N."/>
            <person name="Kosaka T."/>
            <person name="Hosoyama A."/>
            <person name="Suzuki Y."/>
            <person name="Rodrussamee N."/>
            <person name="Matsutani M."/>
            <person name="Murata M."/>
            <person name="Fujimoto N."/>
            <person name="Suprayogi X."/>
            <person name="Tsuchikane K."/>
            <person name="Limtong S."/>
            <person name="Fujita N."/>
            <person name="Yamada M."/>
        </authorList>
    </citation>
    <scope>NUCLEOTIDE SEQUENCE [LARGE SCALE GENOMIC DNA]</scope>
    <source>
        <strain>DMKU3-1042 / BCC 29191 / NBRC 104275</strain>
    </source>
</reference>
<reference key="2">
    <citation type="journal article" date="2015" name="J. Biol. Chem.">
        <title>The thermotolerant yeast Kluyveromyces marxianus is a useful organism for structural and biochemical studies of autophagy.</title>
        <authorList>
            <person name="Yamamoto H."/>
            <person name="Shima T."/>
            <person name="Yamaguchi M."/>
            <person name="Mochizuki Y."/>
            <person name="Hoshida H."/>
            <person name="Kakuta S."/>
            <person name="Kondo-Kakuta C."/>
            <person name="Noda N.N."/>
            <person name="Inagaki F."/>
            <person name="Itoh T."/>
            <person name="Akada R."/>
            <person name="Ohsumi Y."/>
        </authorList>
    </citation>
    <scope>IDENTIFICATION</scope>
    <scope>FUNCTION</scope>
    <scope>DISRUPTION PHENOTYPE</scope>
</reference>
<reference evidence="6" key="3">
    <citation type="journal article" date="2012" name="Structure">
        <title>Structural insights into Atg10-mediated formation of the autophagy-essential Atg12-Atg5 conjugate.</title>
        <authorList>
            <person name="Yamaguchi M."/>
            <person name="Noda N.N."/>
            <person name="Yamamoto H."/>
            <person name="Shima T."/>
            <person name="Kumeta H."/>
            <person name="Kobashigawa Y."/>
            <person name="Akada R."/>
            <person name="Ohsumi Y."/>
            <person name="Inagaki F."/>
        </authorList>
    </citation>
    <scope>X-RAY CRYSTALLOGRAPHY (2.50 ANGSTROMS)</scope>
    <scope>INTERACTION WITH ATG10 AND ATG12</scope>
    <scope>FUNCTION</scope>
    <scope>MUTAGENESIS OF LEU-127; LYS-145; VAL-208 AND GLN-210</scope>
</reference>
<proteinExistence type="evidence at protein level"/>
<gene>
    <name evidence="4" type="primary">ATG5</name>
    <name type="ORF">KLMA_20199</name>
</gene>
<comment type="function">
    <text evidence="1 2 3">Involved in cytoplasm to vacuole transport (Cvt) and autophagic vesicle formation (PubMed:26442587). Autophagy is essential for maintenance of amino acid levels and protein synthesis under nitrogen starvation (By similarity). Required for selective autophagic degradation of the nucleus (nucleophagy) (By similarity). Also required for mitophagy, which eliminates defective or superfluous mitochondria in order to fulfill cellular energy requirements and prevent excess ROS production (By similarity). Conjugation with ATG12, through a ubiquitin-like conjugating system involving ATG7 as an E1-like activating enzyme and ATG10 as an E2-like conjugating enzyme, is essential for its function (PubMed:22682742). The ATG12-ATG5 conjugate acts as an E3-like enzyme which is required for lipidation of ATG8 and ATG8 association to the vesicle membranes (By similarity). ATG12-ATG5 rearranges the ATG3 catalytic center and enhances its E2 activity (By similarity).</text>
</comment>
<comment type="subunit">
    <text evidence="1 2">Conjugated with ATG12 (PubMed:22682742). Interacts with ATG10 (PubMed:22682742). The ATG5-ATG12 conjugate forms a complex with several units of ATG16 (By similarity). The ATG12-ATG5 conjugate also associates with ATG3 (By similarity).</text>
</comment>
<comment type="subcellular location">
    <subcellularLocation>
        <location evidence="1">Preautophagosomal structure membrane</location>
        <topology evidence="1">Peripheral membrane protein</topology>
    </subcellularLocation>
    <text evidence="1">Localizes to the isolation membrane (IM), a membrane sac which is generated from the pre-autophagosomal structure (PAS) (By similarity). Ultimately, the IM expands to become a mature autophagosome (By similarity). Localizes also to a dot at the junction between the IM and the vacuolar membrane, termed the vacuole-IM contact site (VICS) (By similarity). Correct localization to the PAS requires ATG21 (By similarity).</text>
</comment>
<comment type="PTM">
    <text evidence="1 2">Conjugated to ATG12; which is essential for autophagy (PubMed:22682742). Conjugation with ATG12 involves ATG7 as an E1-like activating enzyme and ATG10 as an E2-like conjugating enzyme (By similarity).</text>
</comment>
<comment type="disruption phenotype">
    <text evidence="3">Impairs the formation of preautophagosomal structures (PubMed:26442587).</text>
</comment>
<comment type="miscellaneous">
    <text evidence="3">Kluyveromyces marxianus proteins are shorter in length and have a more ordered secondary structure than their S.cerevisiae counterparts, which might contribute to the superior thermotolerance and solubility (PubMed:26442587). K.marxianus could be therefore useful as a new model organism for further elucidation of the molecular details of autophagy (PubMed:26442587).</text>
</comment>
<comment type="similarity">
    <text evidence="5">Belongs to the ATG5 family.</text>
</comment>
<dbReference type="EMBL" id="AP012214">
    <property type="protein sequence ID" value="BAO38657.1"/>
    <property type="molecule type" value="Genomic_DNA"/>
</dbReference>
<dbReference type="RefSeq" id="XP_022674532.1">
    <property type="nucleotide sequence ID" value="XM_022822741.1"/>
</dbReference>
<dbReference type="PDB" id="3VQI">
    <property type="method" value="X-ray"/>
    <property type="resolution" value="2.50 A"/>
    <property type="chains" value="A/B/C/D/E=1-271"/>
</dbReference>
<dbReference type="PDBsum" id="3VQI"/>
<dbReference type="SMR" id="W0T4V8"/>
<dbReference type="GeneID" id="34714677"/>
<dbReference type="VEuPathDB" id="FungiDB:KLMA_20199"/>
<dbReference type="OrthoDB" id="272162at2759"/>
<dbReference type="EvolutionaryTrace" id="W0T4V8"/>
<dbReference type="Proteomes" id="UP000065495">
    <property type="component" value="Chromosome 2"/>
</dbReference>
<dbReference type="GO" id="GO:0034274">
    <property type="term" value="C:Atg12-Atg5-Atg16 complex"/>
    <property type="evidence" value="ECO:0007669"/>
    <property type="project" value="TreeGrafter"/>
</dbReference>
<dbReference type="GO" id="GO:0005776">
    <property type="term" value="C:autophagosome"/>
    <property type="evidence" value="ECO:0007669"/>
    <property type="project" value="TreeGrafter"/>
</dbReference>
<dbReference type="GO" id="GO:0044233">
    <property type="term" value="C:mitochondria-associated endoplasmic reticulum membrane contact site"/>
    <property type="evidence" value="ECO:0007669"/>
    <property type="project" value="TreeGrafter"/>
</dbReference>
<dbReference type="GO" id="GO:0061908">
    <property type="term" value="C:phagophore"/>
    <property type="evidence" value="ECO:0007669"/>
    <property type="project" value="TreeGrafter"/>
</dbReference>
<dbReference type="GO" id="GO:0034045">
    <property type="term" value="C:phagophore assembly site membrane"/>
    <property type="evidence" value="ECO:0007669"/>
    <property type="project" value="UniProtKB-SubCell"/>
</dbReference>
<dbReference type="GO" id="GO:0019776">
    <property type="term" value="F:Atg8-family ligase activity"/>
    <property type="evidence" value="ECO:0007669"/>
    <property type="project" value="TreeGrafter"/>
</dbReference>
<dbReference type="GO" id="GO:0000422">
    <property type="term" value="P:autophagy of mitochondrion"/>
    <property type="evidence" value="ECO:0007669"/>
    <property type="project" value="TreeGrafter"/>
</dbReference>
<dbReference type="GO" id="GO:0006995">
    <property type="term" value="P:cellular response to nitrogen starvation"/>
    <property type="evidence" value="ECO:0007669"/>
    <property type="project" value="TreeGrafter"/>
</dbReference>
<dbReference type="GO" id="GO:0034727">
    <property type="term" value="P:piecemeal microautophagy of the nucleus"/>
    <property type="evidence" value="ECO:0007669"/>
    <property type="project" value="TreeGrafter"/>
</dbReference>
<dbReference type="GO" id="GO:0015031">
    <property type="term" value="P:protein transport"/>
    <property type="evidence" value="ECO:0007669"/>
    <property type="project" value="UniProtKB-KW"/>
</dbReference>
<dbReference type="Gene3D" id="3.10.20.620">
    <property type="match status" value="1"/>
</dbReference>
<dbReference type="Gene3D" id="1.10.246.190">
    <property type="entry name" value="Autophagy protein Apg5, helix rich domain"/>
    <property type="match status" value="1"/>
</dbReference>
<dbReference type="Gene3D" id="3.10.20.90">
    <property type="entry name" value="Phosphatidylinositol 3-kinase Catalytic Subunit, Chain A, domain 1"/>
    <property type="match status" value="1"/>
</dbReference>
<dbReference type="InterPro" id="IPR007239">
    <property type="entry name" value="Atg5"/>
</dbReference>
<dbReference type="InterPro" id="IPR048940">
    <property type="entry name" value="ATG5_HBR"/>
</dbReference>
<dbReference type="InterPro" id="IPR042526">
    <property type="entry name" value="Atg5_HR"/>
</dbReference>
<dbReference type="InterPro" id="IPR048939">
    <property type="entry name" value="ATG5_UblA"/>
</dbReference>
<dbReference type="InterPro" id="IPR042527">
    <property type="entry name" value="Atg5_UblA_dom_sf"/>
</dbReference>
<dbReference type="InterPro" id="IPR048318">
    <property type="entry name" value="ATG5_UblB"/>
</dbReference>
<dbReference type="PANTHER" id="PTHR13040">
    <property type="entry name" value="AUTOPHAGY PROTEIN 5"/>
    <property type="match status" value="1"/>
</dbReference>
<dbReference type="PANTHER" id="PTHR13040:SF2">
    <property type="entry name" value="AUTOPHAGY PROTEIN 5"/>
    <property type="match status" value="1"/>
</dbReference>
<dbReference type="Pfam" id="PF20637">
    <property type="entry name" value="ATG5_HBR"/>
    <property type="match status" value="1"/>
</dbReference>
<dbReference type="Pfam" id="PF20638">
    <property type="entry name" value="ATG5_UblA"/>
    <property type="match status" value="1"/>
</dbReference>
<dbReference type="Pfam" id="PF04106">
    <property type="entry name" value="ATG5_UblB"/>
    <property type="match status" value="1"/>
</dbReference>
<evidence type="ECO:0000250" key="1">
    <source>
        <dbReference type="UniProtKB" id="Q12380"/>
    </source>
</evidence>
<evidence type="ECO:0000269" key="2">
    <source>
    </source>
</evidence>
<evidence type="ECO:0000269" key="3">
    <source>
    </source>
</evidence>
<evidence type="ECO:0000303" key="4">
    <source>
    </source>
</evidence>
<evidence type="ECO:0000305" key="5"/>
<evidence type="ECO:0007744" key="6">
    <source>
        <dbReference type="PDB" id="3VQI"/>
    </source>
</evidence>
<evidence type="ECO:0007829" key="7">
    <source>
        <dbReference type="PDB" id="3VQI"/>
    </source>
</evidence>
<feature type="chain" id="PRO_0000443876" description="Autophagy-related protein 5">
    <location>
        <begin position="1"/>
        <end position="271"/>
    </location>
</feature>
<feature type="cross-link" description="Glycyl lysine isopeptide (Lys-Gly) (interchain with G-Cter in ATG12)" evidence="2">
    <location>
        <position position="145"/>
    </location>
</feature>
<feature type="mutagenesis site" description="Reduces the formation of the ATG12-ATG5 conjugate." evidence="2">
    <original>L</original>
    <variation>A</variation>
    <location>
        <position position="127"/>
    </location>
</feature>
<feature type="mutagenesis site" description="Impairs the formation of the ATG12-ATG5 conjugate." evidence="2">
    <original>K</original>
    <variation>A</variation>
    <location>
        <position position="145"/>
    </location>
</feature>
<feature type="mutagenesis site" description="Reduces the formation of the ATG12-ATG5 conjugate." evidence="2">
    <original>V</original>
    <variation>A</variation>
    <location>
        <position position="208"/>
    </location>
</feature>
<feature type="mutagenesis site" description="Reduces the formation of the ATG12-ATG5 conjugate." evidence="2">
    <original>Q</original>
    <variation>A</variation>
    <location>
        <position position="210"/>
    </location>
</feature>
<feature type="helix" evidence="7">
    <location>
        <begin position="3"/>
        <end position="9"/>
    </location>
</feature>
<feature type="strand" evidence="7">
    <location>
        <begin position="12"/>
        <end position="19"/>
    </location>
</feature>
<feature type="turn" evidence="7">
    <location>
        <begin position="21"/>
        <end position="23"/>
    </location>
</feature>
<feature type="helix" evidence="7">
    <location>
        <begin position="31"/>
        <end position="33"/>
    </location>
</feature>
<feature type="strand" evidence="7">
    <location>
        <begin position="34"/>
        <end position="40"/>
    </location>
</feature>
<feature type="helix" evidence="7">
    <location>
        <begin position="45"/>
        <end position="56"/>
    </location>
</feature>
<feature type="helix" evidence="7">
    <location>
        <begin position="57"/>
        <end position="59"/>
    </location>
</feature>
<feature type="strand" evidence="7">
    <location>
        <begin position="71"/>
        <end position="75"/>
    </location>
</feature>
<feature type="helix" evidence="7">
    <location>
        <begin position="86"/>
        <end position="93"/>
    </location>
</feature>
<feature type="strand" evidence="7">
    <location>
        <begin position="111"/>
        <end position="118"/>
    </location>
</feature>
<feature type="helix" evidence="7">
    <location>
        <begin position="132"/>
        <end position="152"/>
    </location>
</feature>
<feature type="strand" evidence="7">
    <location>
        <begin position="153"/>
        <end position="155"/>
    </location>
</feature>
<feature type="turn" evidence="7">
    <location>
        <begin position="157"/>
        <end position="160"/>
    </location>
</feature>
<feature type="helix" evidence="7">
    <location>
        <begin position="163"/>
        <end position="175"/>
    </location>
</feature>
<feature type="helix" evidence="7">
    <location>
        <begin position="178"/>
        <end position="186"/>
    </location>
</feature>
<feature type="helix" evidence="7">
    <location>
        <begin position="191"/>
        <end position="193"/>
    </location>
</feature>
<feature type="strand" evidence="7">
    <location>
        <begin position="199"/>
        <end position="202"/>
    </location>
</feature>
<feature type="helix" evidence="7">
    <location>
        <begin position="222"/>
        <end position="227"/>
    </location>
</feature>
<feature type="turn" evidence="7">
    <location>
        <begin position="228"/>
        <end position="230"/>
    </location>
</feature>
<feature type="strand" evidence="7">
    <location>
        <begin position="238"/>
        <end position="241"/>
    </location>
</feature>
<feature type="strand" evidence="7">
    <location>
        <begin position="244"/>
        <end position="247"/>
    </location>
</feature>
<feature type="helix" evidence="7">
    <location>
        <begin position="252"/>
        <end position="259"/>
    </location>
</feature>
<feature type="strand" evidence="7">
    <location>
        <begin position="266"/>
        <end position="269"/>
    </location>
</feature>
<protein>
    <recommendedName>
        <fullName evidence="4">Autophagy-related protein 5</fullName>
    </recommendedName>
</protein>
<organism>
    <name type="scientific">Kluyveromyces marxianus (strain DMKU3-1042 / BCC 29191 / NBRC 104275)</name>
    <name type="common">Yeast</name>
    <name type="synonym">Candida kefyr</name>
    <dbReference type="NCBI Taxonomy" id="1003335"/>
    <lineage>
        <taxon>Eukaryota</taxon>
        <taxon>Fungi</taxon>
        <taxon>Dikarya</taxon>
        <taxon>Ascomycota</taxon>
        <taxon>Saccharomycotina</taxon>
        <taxon>Saccharomycetes</taxon>
        <taxon>Saccharomycetales</taxon>
        <taxon>Saccharomycetaceae</taxon>
        <taxon>Kluyveromyces</taxon>
    </lineage>
</organism>
<name>ATG5_KLUMD</name>
<keyword id="KW-0002">3D-structure</keyword>
<keyword id="KW-0072">Autophagy</keyword>
<keyword id="KW-1017">Isopeptide bond</keyword>
<keyword id="KW-0472">Membrane</keyword>
<keyword id="KW-0653">Protein transport</keyword>
<keyword id="KW-0813">Transport</keyword>
<keyword id="KW-0832">Ubl conjugation</keyword>